<sequence>MKAYLALISAAVIGLAACSQEPAAPAAEATPAAEAPASEAPAAEAAPADAAEAPAAGNCAATVESNDNMQFNTKDIQVSKACKEFTITLKHTGTQPKASMGHNLVIAKAEDMDGVFKDGVGAADTDYVKPDDARVVAHTKLIGGGEESSLTLDPAKLADGDYKFACTFPGHGALMNGKVTLVD</sequence>
<name>H8_NEIMF</name>
<reference key="1">
    <citation type="journal article" date="1987" name="Mol. Microbiol.">
        <title>Localization of a conserved epitope and an azurin-like domain in the H.8 protein of pathogenic Neisseria.</title>
        <authorList>
            <person name="Kawula T.H."/>
            <person name="Spinola S.M."/>
            <person name="Klapper D.G."/>
            <person name="Cannon J.G."/>
        </authorList>
    </citation>
    <scope>NUCLEOTIDE SEQUENCE [GENOMIC DNA]</scope>
</reference>
<reference key="2">
    <citation type="journal article" date="2007" name="PLoS Genet.">
        <title>Meningococcal genetic variation mechanisms viewed through comparative analysis of serogroup C strain FAM18.</title>
        <authorList>
            <person name="Bentley S.D."/>
            <person name="Vernikos G.S."/>
            <person name="Snyder L.A.S."/>
            <person name="Churcher C."/>
            <person name="Arrowsmith C."/>
            <person name="Chillingworth T."/>
            <person name="Cronin A."/>
            <person name="Davis P.H."/>
            <person name="Holroyd N.E."/>
            <person name="Jagels K."/>
            <person name="Maddison M."/>
            <person name="Moule S."/>
            <person name="Rabbinowitsch E."/>
            <person name="Sharp S."/>
            <person name="Unwin L."/>
            <person name="Whitehead S."/>
            <person name="Quail M.A."/>
            <person name="Achtman M."/>
            <person name="Barrell B.G."/>
            <person name="Saunders N.J."/>
            <person name="Parkhill J."/>
        </authorList>
    </citation>
    <scope>NUCLEOTIDE SEQUENCE [LARGE SCALE GENOMIC DNA]</scope>
    <source>
        <strain>ATCC 700532 / DSM 15464 / FAM18</strain>
    </source>
</reference>
<evidence type="ECO:0000250" key="1"/>
<evidence type="ECO:0000255" key="2">
    <source>
        <dbReference type="PROSITE-ProRule" id="PRU00303"/>
    </source>
</evidence>
<evidence type="ECO:0000256" key="3">
    <source>
        <dbReference type="SAM" id="MobiDB-lite"/>
    </source>
</evidence>
<evidence type="ECO:0000305" key="4"/>
<feature type="signal peptide" evidence="2">
    <location>
        <begin position="1"/>
        <end position="17"/>
    </location>
</feature>
<feature type="chain" id="PRO_0000002856" description="Outer membrane protein H.8">
    <location>
        <begin position="18"/>
        <end position="183"/>
    </location>
</feature>
<feature type="domain" description="Plastocyanin-like">
    <location>
        <begin position="57"/>
        <end position="183"/>
    </location>
</feature>
<feature type="region of interest" description="Disordered" evidence="3">
    <location>
        <begin position="27"/>
        <end position="51"/>
    </location>
</feature>
<feature type="binding site" evidence="1">
    <location>
        <position position="102"/>
    </location>
    <ligand>
        <name>Cu cation</name>
        <dbReference type="ChEBI" id="CHEBI:23378"/>
    </ligand>
</feature>
<feature type="binding site" evidence="1">
    <location>
        <position position="166"/>
    </location>
    <ligand>
        <name>Cu cation</name>
        <dbReference type="ChEBI" id="CHEBI:23378"/>
    </ligand>
</feature>
<feature type="binding site" evidence="1">
    <location>
        <position position="171"/>
    </location>
    <ligand>
        <name>Cu cation</name>
        <dbReference type="ChEBI" id="CHEBI:23378"/>
    </ligand>
</feature>
<feature type="binding site" evidence="1">
    <location>
        <position position="175"/>
    </location>
    <ligand>
        <name>Cu cation</name>
        <dbReference type="ChEBI" id="CHEBI:23378"/>
    </ligand>
</feature>
<feature type="lipid moiety-binding region" description="N-palmitoyl cysteine" evidence="2">
    <location>
        <position position="18"/>
    </location>
</feature>
<feature type="lipid moiety-binding region" description="S-diacylglycerol cysteine" evidence="2">
    <location>
        <position position="18"/>
    </location>
</feature>
<proteinExistence type="inferred from homology"/>
<keyword id="KW-0998">Cell outer membrane</keyword>
<keyword id="KW-0186">Copper</keyword>
<keyword id="KW-0249">Electron transport</keyword>
<keyword id="KW-0449">Lipoprotein</keyword>
<keyword id="KW-0472">Membrane</keyword>
<keyword id="KW-0479">Metal-binding</keyword>
<keyword id="KW-0564">Palmitate</keyword>
<keyword id="KW-0732">Signal</keyword>
<keyword id="KW-0813">Transport</keyword>
<protein>
    <recommendedName>
        <fullName>Outer membrane protein H.8</fullName>
    </recommendedName>
</protein>
<gene>
    <name type="ordered locus">NMC1462</name>
</gene>
<accession>P07212</accession>
<accession>A1KUX0</accession>
<organism>
    <name type="scientific">Neisseria meningitidis serogroup C / serotype 2a (strain ATCC 700532 / DSM 15464 / FAM18)</name>
    <dbReference type="NCBI Taxonomy" id="272831"/>
    <lineage>
        <taxon>Bacteria</taxon>
        <taxon>Pseudomonadati</taxon>
        <taxon>Pseudomonadota</taxon>
        <taxon>Betaproteobacteria</taxon>
        <taxon>Neisseriales</taxon>
        <taxon>Neisseriaceae</taxon>
        <taxon>Neisseria</taxon>
    </lineage>
</organism>
<dbReference type="EMBL" id="Y00530">
    <property type="protein sequence ID" value="CAA68589.1"/>
    <property type="molecule type" value="Genomic_DNA"/>
</dbReference>
<dbReference type="EMBL" id="AM421808">
    <property type="protein sequence ID" value="CAM10669.1"/>
    <property type="status" value="ALT_INIT"/>
    <property type="molecule type" value="Genomic_DNA"/>
</dbReference>
<dbReference type="PIR" id="S03752">
    <property type="entry name" value="AZNHM"/>
</dbReference>
<dbReference type="BMRB" id="P07212"/>
<dbReference type="SMR" id="P07212"/>
<dbReference type="KEGG" id="nmc:NMC1462"/>
<dbReference type="HOGENOM" id="CLU_112845_0_0_4"/>
<dbReference type="Proteomes" id="UP000002286">
    <property type="component" value="Chromosome"/>
</dbReference>
<dbReference type="GO" id="GO:0009279">
    <property type="term" value="C:cell outer membrane"/>
    <property type="evidence" value="ECO:0007669"/>
    <property type="project" value="UniProtKB-SubCell"/>
</dbReference>
<dbReference type="GO" id="GO:0005507">
    <property type="term" value="F:copper ion binding"/>
    <property type="evidence" value="ECO:0007669"/>
    <property type="project" value="InterPro"/>
</dbReference>
<dbReference type="GO" id="GO:0009055">
    <property type="term" value="F:electron transfer activity"/>
    <property type="evidence" value="ECO:0007669"/>
    <property type="project" value="InterPro"/>
</dbReference>
<dbReference type="CDD" id="cd13922">
    <property type="entry name" value="Azurin"/>
    <property type="match status" value="1"/>
</dbReference>
<dbReference type="Gene3D" id="2.60.40.420">
    <property type="entry name" value="Cupredoxins - blue copper proteins"/>
    <property type="match status" value="1"/>
</dbReference>
<dbReference type="InterPro" id="IPR014068">
    <property type="entry name" value="Azurin"/>
</dbReference>
<dbReference type="InterPro" id="IPR000923">
    <property type="entry name" value="BlueCu_1"/>
</dbReference>
<dbReference type="InterPro" id="IPR028871">
    <property type="entry name" value="BlueCu_1_BS"/>
</dbReference>
<dbReference type="InterPro" id="IPR050845">
    <property type="entry name" value="Cu-binding_ET"/>
</dbReference>
<dbReference type="InterPro" id="IPR008972">
    <property type="entry name" value="Cupredoxin"/>
</dbReference>
<dbReference type="NCBIfam" id="TIGR02695">
    <property type="entry name" value="azurin"/>
    <property type="match status" value="1"/>
</dbReference>
<dbReference type="PANTHER" id="PTHR38439">
    <property type="entry name" value="AURACYANIN-B"/>
    <property type="match status" value="1"/>
</dbReference>
<dbReference type="PANTHER" id="PTHR38439:SF2">
    <property type="entry name" value="OUTER MEMBRANE PROTEIN H.8"/>
    <property type="match status" value="1"/>
</dbReference>
<dbReference type="Pfam" id="PF00127">
    <property type="entry name" value="Copper-bind"/>
    <property type="match status" value="1"/>
</dbReference>
<dbReference type="SUPFAM" id="SSF49503">
    <property type="entry name" value="Cupredoxins"/>
    <property type="match status" value="1"/>
</dbReference>
<dbReference type="PROSITE" id="PS00196">
    <property type="entry name" value="COPPER_BLUE"/>
    <property type="match status" value="1"/>
</dbReference>
<dbReference type="PROSITE" id="PS51257">
    <property type="entry name" value="PROKAR_LIPOPROTEIN"/>
    <property type="match status" value="1"/>
</dbReference>
<comment type="cofactor">
    <cofactor evidence="1">
        <name>Cu cation</name>
        <dbReference type="ChEBI" id="CHEBI:23378"/>
    </cofactor>
    <text evidence="1">Binds 1 copper ion per subunit.</text>
</comment>
<comment type="subcellular location">
    <subcellularLocation>
        <location evidence="1">Cell outer membrane</location>
        <topology evidence="2">Lipid-anchor</topology>
    </subcellularLocation>
</comment>
<comment type="sequence caution" evidence="4">
    <conflict type="erroneous initiation">
        <sequence resource="EMBL-CDS" id="CAM10669"/>
    </conflict>
</comment>